<organism>
    <name type="scientific">Cupriavidus pinatubonensis (strain JMP 134 / LMG 1197)</name>
    <name type="common">Cupriavidus necator (strain JMP 134)</name>
    <dbReference type="NCBI Taxonomy" id="264198"/>
    <lineage>
        <taxon>Bacteria</taxon>
        <taxon>Pseudomonadati</taxon>
        <taxon>Pseudomonadota</taxon>
        <taxon>Betaproteobacteria</taxon>
        <taxon>Burkholderiales</taxon>
        <taxon>Burkholderiaceae</taxon>
        <taxon>Cupriavidus</taxon>
    </lineage>
</organism>
<reference key="1">
    <citation type="journal article" date="2010" name="PLoS ONE">
        <title>The complete multipartite genome sequence of Cupriavidus necator JMP134, a versatile pollutant degrader.</title>
        <authorList>
            <person name="Lykidis A."/>
            <person name="Perez-Pantoja D."/>
            <person name="Ledger T."/>
            <person name="Mavromatis K."/>
            <person name="Anderson I.J."/>
            <person name="Ivanova N.N."/>
            <person name="Hooper S.D."/>
            <person name="Lapidus A."/>
            <person name="Lucas S."/>
            <person name="Gonzalez B."/>
            <person name="Kyrpides N.C."/>
        </authorList>
    </citation>
    <scope>NUCLEOTIDE SEQUENCE [LARGE SCALE GENOMIC DNA]</scope>
    <source>
        <strain>JMP134 / LMG 1197</strain>
    </source>
</reference>
<keyword id="KW-0058">Aromatic hydrocarbons catabolism</keyword>
<keyword id="KW-0378">Hydrolase</keyword>
<dbReference type="EC" id="3.7.1.14" evidence="1"/>
<dbReference type="EMBL" id="CP000090">
    <property type="protein sequence ID" value="AAZ59656.1"/>
    <property type="molecule type" value="Genomic_DNA"/>
</dbReference>
<dbReference type="SMR" id="Q476M7"/>
<dbReference type="STRING" id="264198.Reut_A0274"/>
<dbReference type="ESTHER" id="cuppj-mhpc">
    <property type="family name" value="Carbon-carbon_bond_hydrolase"/>
</dbReference>
<dbReference type="KEGG" id="reu:Reut_A0274"/>
<dbReference type="eggNOG" id="COG2267">
    <property type="taxonomic scope" value="Bacteria"/>
</dbReference>
<dbReference type="HOGENOM" id="CLU_020336_13_2_4"/>
<dbReference type="OrthoDB" id="9799989at2"/>
<dbReference type="UniPathway" id="UPA00714"/>
<dbReference type="GO" id="GO:0005737">
    <property type="term" value="C:cytoplasm"/>
    <property type="evidence" value="ECO:0007669"/>
    <property type="project" value="InterPro"/>
</dbReference>
<dbReference type="GO" id="GO:0052823">
    <property type="term" value="F:2-hydroxy-6-oxonona-2,4,7-trienedioate hydrolase activity"/>
    <property type="evidence" value="ECO:0007669"/>
    <property type="project" value="RHEA"/>
</dbReference>
<dbReference type="GO" id="GO:0018771">
    <property type="term" value="F:2-hydroxy-6-oxonona-2,4-dienedioate hydrolase activity"/>
    <property type="evidence" value="ECO:0007669"/>
    <property type="project" value="UniProtKB-UniRule"/>
</dbReference>
<dbReference type="GO" id="GO:0042803">
    <property type="term" value="F:protein homodimerization activity"/>
    <property type="evidence" value="ECO:0007669"/>
    <property type="project" value="InterPro"/>
</dbReference>
<dbReference type="GO" id="GO:0019380">
    <property type="term" value="P:3-phenylpropionate catabolic process"/>
    <property type="evidence" value="ECO:0007669"/>
    <property type="project" value="UniProtKB-UniRule"/>
</dbReference>
<dbReference type="Gene3D" id="3.40.50.1820">
    <property type="entry name" value="alpha/beta hydrolase"/>
    <property type="match status" value="1"/>
</dbReference>
<dbReference type="HAMAP" id="MF_01654">
    <property type="entry name" value="MhpC"/>
    <property type="match status" value="1"/>
</dbReference>
<dbReference type="InterPro" id="IPR000073">
    <property type="entry name" value="AB_hydrolase_1"/>
</dbReference>
<dbReference type="InterPro" id="IPR029058">
    <property type="entry name" value="AB_hydrolase_fold"/>
</dbReference>
<dbReference type="InterPro" id="IPR000639">
    <property type="entry name" value="Epox_hydrolase-like"/>
</dbReference>
<dbReference type="InterPro" id="IPR023791">
    <property type="entry name" value="MhpC_alpha/beta_hydrolase"/>
</dbReference>
<dbReference type="PANTHER" id="PTHR43689:SF8">
    <property type="entry name" value="ALPHA_BETA-HYDROLASES SUPERFAMILY PROTEIN"/>
    <property type="match status" value="1"/>
</dbReference>
<dbReference type="PANTHER" id="PTHR43689">
    <property type="entry name" value="HYDROLASE"/>
    <property type="match status" value="1"/>
</dbReference>
<dbReference type="Pfam" id="PF00561">
    <property type="entry name" value="Abhydrolase_1"/>
    <property type="match status" value="1"/>
</dbReference>
<dbReference type="PRINTS" id="PR00111">
    <property type="entry name" value="ABHYDROLASE"/>
</dbReference>
<dbReference type="PRINTS" id="PR00412">
    <property type="entry name" value="EPOXHYDRLASE"/>
</dbReference>
<dbReference type="SUPFAM" id="SSF53474">
    <property type="entry name" value="alpha/beta-Hydrolases"/>
    <property type="match status" value="1"/>
</dbReference>
<comment type="function">
    <text evidence="1">Catalyzes the cleavage of the C5-C6 bond of 2-hydroxy-6-oxononadienedioate and 2-hydroxy-6-oxononatrienedioate, a dienol ring fission product of the bacterial meta-cleavage pathway for degradation of phenylpropionic acid.</text>
</comment>
<comment type="catalytic activity">
    <reaction evidence="1">
        <text>(2Z,4E)-2-hydroxy-6-oxonona-2,4-dienedioate + H2O = (2Z)-2-hydroxypenta-2,4-dienoate + succinate + H(+)</text>
        <dbReference type="Rhea" id="RHEA:34187"/>
        <dbReference type="ChEBI" id="CHEBI:15377"/>
        <dbReference type="ChEBI" id="CHEBI:15378"/>
        <dbReference type="ChEBI" id="CHEBI:30031"/>
        <dbReference type="ChEBI" id="CHEBI:66887"/>
        <dbReference type="ChEBI" id="CHEBI:67152"/>
        <dbReference type="EC" id="3.7.1.14"/>
    </reaction>
</comment>
<comment type="catalytic activity">
    <reaction evidence="1">
        <text>(2Z,4E,7E)-2-hydroxy-6-oxonona-2,4,7-trienedioate + H2O = (2Z)-2-hydroxypenta-2,4-dienoate + fumarate + H(+)</text>
        <dbReference type="Rhea" id="RHEA:34191"/>
        <dbReference type="ChEBI" id="CHEBI:15377"/>
        <dbReference type="ChEBI" id="CHEBI:15378"/>
        <dbReference type="ChEBI" id="CHEBI:29806"/>
        <dbReference type="ChEBI" id="CHEBI:66888"/>
        <dbReference type="ChEBI" id="CHEBI:67152"/>
        <dbReference type="EC" id="3.7.1.14"/>
    </reaction>
</comment>
<comment type="pathway">
    <text evidence="1">Aromatic compound metabolism; 3-phenylpropanoate degradation.</text>
</comment>
<comment type="subunit">
    <text evidence="1">Homodimer.</text>
</comment>
<comment type="similarity">
    <text evidence="1">Belongs to the AB hydrolase superfamily. MhpC family.</text>
</comment>
<evidence type="ECO:0000255" key="1">
    <source>
        <dbReference type="HAMAP-Rule" id="MF_01654"/>
    </source>
</evidence>
<feature type="chain" id="PRO_0000337787" description="2-hydroxy-6-oxononadienedioate/2-hydroxy-6-oxononatrienedioate hydrolase">
    <location>
        <begin position="1"/>
        <end position="289"/>
    </location>
</feature>
<feature type="active site" description="Proton acceptor" evidence="1">
    <location>
        <position position="269"/>
    </location>
</feature>
<feature type="site" description="Transition state stabilizer" evidence="1">
    <location>
        <position position="116"/>
    </location>
</feature>
<feature type="site" description="Catalytic role in ketonization of the dienol substrate (substrate destabilization)" evidence="1">
    <location>
        <position position="194"/>
    </location>
</feature>
<sequence>MQANVQAITEAGTSRFVTVKDGDTEFRIHCNDTGAGAETVVMLHGSGPGATGWANFNRNVEPLVAAGYRVLLVDCPGWGKSDPVVNAGSRSELNGRVLKGVLDELDIERVHILGNSMGGHSAVAFALANPQRVGKLVLMGGGTGGPSLYAPMPTEGIKLLNGLYREPSIENLKRMMNVFVYDASSLTDDLMQARLDNMLARRDHLENFVKSLAANPKQFTDYGSRLGEITAPTLVIWGRDDRFVPMDVGLRLIAGIPNAQMHIFNRCGHWAQWEHAKAFNRMVVDFLGN</sequence>
<protein>
    <recommendedName>
        <fullName evidence="1">2-hydroxy-6-oxononadienedioate/2-hydroxy-6-oxononatrienedioate hydrolase</fullName>
        <ecNumber evidence="1">3.7.1.14</ecNumber>
    </recommendedName>
    <alternativeName>
        <fullName evidence="1">2-hydroxy-6-ketonona-2,4-diene-1,9-dioic acid 5,6-hydrolase</fullName>
    </alternativeName>
    <alternativeName>
        <fullName evidence="1">2-hydroxy-6-oxonona-2,4,7-triene-1,9-dioic acid 5,6-hydrolase</fullName>
    </alternativeName>
    <alternativeName>
        <fullName evidence="1">2-hydroxy-6-oxonona-2,4-diene-1,9-dioic acid 5,6-hydrolase</fullName>
    </alternativeName>
</protein>
<accession>Q476M7</accession>
<gene>
    <name evidence="1" type="primary">mhpC</name>
    <name type="ordered locus">Reut_A0274</name>
</gene>
<name>MHPC_CUPPJ</name>
<proteinExistence type="inferred from homology"/>